<name>IF6_THEPD</name>
<proteinExistence type="inferred from homology"/>
<evidence type="ECO:0000255" key="1">
    <source>
        <dbReference type="HAMAP-Rule" id="MF_00032"/>
    </source>
</evidence>
<reference key="1">
    <citation type="journal article" date="2008" name="J. Bacteriol.">
        <title>Genome sequence of Thermofilum pendens reveals an exceptional loss of biosynthetic pathways without genome reduction.</title>
        <authorList>
            <person name="Anderson I."/>
            <person name="Rodriguez J."/>
            <person name="Susanti D."/>
            <person name="Porat I."/>
            <person name="Reich C."/>
            <person name="Ulrich L.E."/>
            <person name="Elkins J.G."/>
            <person name="Mavromatis K."/>
            <person name="Lykidis A."/>
            <person name="Kim E."/>
            <person name="Thompson L.S."/>
            <person name="Nolan M."/>
            <person name="Land M."/>
            <person name="Copeland A."/>
            <person name="Lapidus A."/>
            <person name="Lucas S."/>
            <person name="Detter C."/>
            <person name="Zhulin I.B."/>
            <person name="Olsen G.J."/>
            <person name="Whitman W."/>
            <person name="Mukhopadhyay B."/>
            <person name="Bristow J."/>
            <person name="Kyrpides N."/>
        </authorList>
    </citation>
    <scope>NUCLEOTIDE SEQUENCE [LARGE SCALE GENOMIC DNA]</scope>
    <source>
        <strain>DSM 2475 / Hrk 5</strain>
    </source>
</reference>
<dbReference type="EMBL" id="CP000505">
    <property type="protein sequence ID" value="ABL77883.1"/>
    <property type="molecule type" value="Genomic_DNA"/>
</dbReference>
<dbReference type="RefSeq" id="WP_011752148.1">
    <property type="nucleotide sequence ID" value="NC_008698.1"/>
</dbReference>
<dbReference type="SMR" id="A1RXF3"/>
<dbReference type="STRING" id="368408.Tpen_0474"/>
<dbReference type="EnsemblBacteria" id="ABL77883">
    <property type="protein sequence ID" value="ABL77883"/>
    <property type="gene ID" value="Tpen_0474"/>
</dbReference>
<dbReference type="GeneID" id="4602033"/>
<dbReference type="KEGG" id="tpe:Tpen_0474"/>
<dbReference type="eggNOG" id="arCOG04176">
    <property type="taxonomic scope" value="Archaea"/>
</dbReference>
<dbReference type="HOGENOM" id="CLU_071894_1_0_2"/>
<dbReference type="OrthoDB" id="33582at2157"/>
<dbReference type="Proteomes" id="UP000000641">
    <property type="component" value="Chromosome"/>
</dbReference>
<dbReference type="GO" id="GO:0043022">
    <property type="term" value="F:ribosome binding"/>
    <property type="evidence" value="ECO:0007669"/>
    <property type="project" value="InterPro"/>
</dbReference>
<dbReference type="GO" id="GO:0003743">
    <property type="term" value="F:translation initiation factor activity"/>
    <property type="evidence" value="ECO:0007669"/>
    <property type="project" value="UniProtKB-UniRule"/>
</dbReference>
<dbReference type="GO" id="GO:0042256">
    <property type="term" value="P:cytosolic ribosome assembly"/>
    <property type="evidence" value="ECO:0007669"/>
    <property type="project" value="InterPro"/>
</dbReference>
<dbReference type="Gene3D" id="3.75.10.10">
    <property type="entry name" value="L-arginine/glycine Amidinotransferase, Chain A"/>
    <property type="match status" value="1"/>
</dbReference>
<dbReference type="HAMAP" id="MF_00032">
    <property type="entry name" value="eIF_6"/>
    <property type="match status" value="1"/>
</dbReference>
<dbReference type="InterPro" id="IPR002769">
    <property type="entry name" value="eIF6"/>
</dbReference>
<dbReference type="NCBIfam" id="TIGR00323">
    <property type="entry name" value="eIF-6"/>
    <property type="match status" value="1"/>
</dbReference>
<dbReference type="PANTHER" id="PTHR10784">
    <property type="entry name" value="TRANSLATION INITIATION FACTOR 6"/>
    <property type="match status" value="1"/>
</dbReference>
<dbReference type="Pfam" id="PF01912">
    <property type="entry name" value="eIF-6"/>
    <property type="match status" value="1"/>
</dbReference>
<dbReference type="PIRSF" id="PIRSF006413">
    <property type="entry name" value="IF-6"/>
    <property type="match status" value="1"/>
</dbReference>
<dbReference type="SMART" id="SM00654">
    <property type="entry name" value="eIF6"/>
    <property type="match status" value="1"/>
</dbReference>
<dbReference type="SUPFAM" id="SSF55909">
    <property type="entry name" value="Pentein"/>
    <property type="match status" value="1"/>
</dbReference>
<keyword id="KW-0396">Initiation factor</keyword>
<keyword id="KW-0648">Protein biosynthesis</keyword>
<keyword id="KW-1185">Reference proteome</keyword>
<gene>
    <name evidence="1" type="primary">eif6</name>
    <name type="ordered locus">Tpen_0474</name>
</gene>
<protein>
    <recommendedName>
        <fullName evidence="1">Translation initiation factor 6</fullName>
        <shortName evidence="1">aIF-6</shortName>
    </recommendedName>
</protein>
<comment type="function">
    <text evidence="1">Binds to the 50S ribosomal subunit and prevents its association with the 30S ribosomal subunit to form the 70S initiation complex.</text>
</comment>
<comment type="similarity">
    <text evidence="1">Belongs to the eIF-6 family.</text>
</comment>
<sequence>MVNVEAISLYGTPNIGVYIFANDRFALIPYDAPEKLDRKIAENLSVDAFRVSVAGTRLVGIFLAGNNNGLVVPRVILDSELEHLKSLLDVNIVVLEDVRETGIGNLVLANDNGCVASQILPKSAVDRIADALGVECIQMSIGDVPFVGSLSVATNRGVALPPLATEEEIKSVEEALKVKANVLTVNRGKMFLRTGLVANSKGALVGEDTTGHEMMQLQRIFFQ</sequence>
<accession>A1RXF3</accession>
<organism>
    <name type="scientific">Thermofilum pendens (strain DSM 2475 / Hrk 5)</name>
    <dbReference type="NCBI Taxonomy" id="368408"/>
    <lineage>
        <taxon>Archaea</taxon>
        <taxon>Thermoproteota</taxon>
        <taxon>Thermoprotei</taxon>
        <taxon>Thermofilales</taxon>
        <taxon>Thermofilaceae</taxon>
        <taxon>Thermofilum</taxon>
    </lineage>
</organism>
<feature type="chain" id="PRO_1000002605" description="Translation initiation factor 6">
    <location>
        <begin position="1"/>
        <end position="223"/>
    </location>
</feature>